<accession>A6U565</accession>
<proteinExistence type="inferred from homology"/>
<reference key="1">
    <citation type="submission" date="2007-06" db="EMBL/GenBank/DDBJ databases">
        <title>Complete sequence of chromosome of Staphylococcus aureus subsp. aureus JH1.</title>
        <authorList>
            <consortium name="US DOE Joint Genome Institute"/>
            <person name="Copeland A."/>
            <person name="Lucas S."/>
            <person name="Lapidus A."/>
            <person name="Barry K."/>
            <person name="Detter J.C."/>
            <person name="Glavina del Rio T."/>
            <person name="Hammon N."/>
            <person name="Israni S."/>
            <person name="Dalin E."/>
            <person name="Tice H."/>
            <person name="Pitluck S."/>
            <person name="Chain P."/>
            <person name="Malfatti S."/>
            <person name="Shin M."/>
            <person name="Vergez L."/>
            <person name="Schmutz J."/>
            <person name="Larimer F."/>
            <person name="Land M."/>
            <person name="Hauser L."/>
            <person name="Kyrpides N."/>
            <person name="Ivanova N."/>
            <person name="Tomasz A."/>
            <person name="Richardson P."/>
        </authorList>
    </citation>
    <scope>NUCLEOTIDE SEQUENCE [LARGE SCALE GENOMIC DNA]</scope>
    <source>
        <strain>JH1</strain>
    </source>
</reference>
<comment type="function">
    <text evidence="1">Required for the first step of histidine biosynthesis. May allow the feedback regulation of ATP phosphoribosyltransferase activity by histidine.</text>
</comment>
<comment type="pathway">
    <text evidence="1">Amino-acid biosynthesis; L-histidine biosynthesis; L-histidine from 5-phospho-alpha-D-ribose 1-diphosphate: step 1/9.</text>
</comment>
<comment type="subunit">
    <text evidence="1">Heteromultimer composed of HisG and HisZ subunits.</text>
</comment>
<comment type="subcellular location">
    <subcellularLocation>
        <location evidence="1">Cytoplasm</location>
    </subcellularLocation>
</comment>
<comment type="miscellaneous">
    <text>This function is generally fulfilled by the C-terminal part of HisG, which is missing in some bacteria such as this one.</text>
</comment>
<comment type="similarity">
    <text evidence="1">Belongs to the class-II aminoacyl-tRNA synthetase family. HisZ subfamily.</text>
</comment>
<protein>
    <recommendedName>
        <fullName evidence="1">ATP phosphoribosyltransferase regulatory subunit</fullName>
    </recommendedName>
</protein>
<organism>
    <name type="scientific">Staphylococcus aureus (strain JH1)</name>
    <dbReference type="NCBI Taxonomy" id="359787"/>
    <lineage>
        <taxon>Bacteria</taxon>
        <taxon>Bacillati</taxon>
        <taxon>Bacillota</taxon>
        <taxon>Bacilli</taxon>
        <taxon>Bacillales</taxon>
        <taxon>Staphylococcaceae</taxon>
        <taxon>Staphylococcus</taxon>
    </lineage>
</organism>
<evidence type="ECO:0000255" key="1">
    <source>
        <dbReference type="HAMAP-Rule" id="MF_00125"/>
    </source>
</evidence>
<name>HISZ_STAA2</name>
<gene>
    <name evidence="1" type="primary">hisZ</name>
    <name type="ordered locus">SaurJH1_2761</name>
</gene>
<keyword id="KW-0028">Amino-acid biosynthesis</keyword>
<keyword id="KW-0963">Cytoplasm</keyword>
<keyword id="KW-0368">Histidine biosynthesis</keyword>
<dbReference type="EMBL" id="CP000736">
    <property type="protein sequence ID" value="ABR53583.1"/>
    <property type="molecule type" value="Genomic_DNA"/>
</dbReference>
<dbReference type="SMR" id="A6U565"/>
<dbReference type="KEGG" id="sah:SaurJH1_2761"/>
<dbReference type="HOGENOM" id="CLU_089652_0_0_9"/>
<dbReference type="UniPathway" id="UPA00031">
    <property type="reaction ID" value="UER00006"/>
</dbReference>
<dbReference type="GO" id="GO:0005737">
    <property type="term" value="C:cytoplasm"/>
    <property type="evidence" value="ECO:0007669"/>
    <property type="project" value="UniProtKB-SubCell"/>
</dbReference>
<dbReference type="GO" id="GO:0140096">
    <property type="term" value="F:catalytic activity, acting on a protein"/>
    <property type="evidence" value="ECO:0007669"/>
    <property type="project" value="UniProtKB-ARBA"/>
</dbReference>
<dbReference type="GO" id="GO:0016740">
    <property type="term" value="F:transferase activity"/>
    <property type="evidence" value="ECO:0007669"/>
    <property type="project" value="UniProtKB-ARBA"/>
</dbReference>
<dbReference type="GO" id="GO:0000105">
    <property type="term" value="P:L-histidine biosynthetic process"/>
    <property type="evidence" value="ECO:0007669"/>
    <property type="project" value="UniProtKB-UniRule"/>
</dbReference>
<dbReference type="Gene3D" id="3.30.930.10">
    <property type="entry name" value="Bira Bifunctional Protein, Domain 2"/>
    <property type="match status" value="1"/>
</dbReference>
<dbReference type="HAMAP" id="MF_00125">
    <property type="entry name" value="HisZ"/>
    <property type="match status" value="1"/>
</dbReference>
<dbReference type="InterPro" id="IPR045864">
    <property type="entry name" value="aa-tRNA-synth_II/BPL/LPL"/>
</dbReference>
<dbReference type="InterPro" id="IPR041715">
    <property type="entry name" value="HisRS-like_core"/>
</dbReference>
<dbReference type="InterPro" id="IPR004517">
    <property type="entry name" value="HisZ"/>
</dbReference>
<dbReference type="NCBIfam" id="NF008947">
    <property type="entry name" value="PRK12294.1"/>
    <property type="match status" value="1"/>
</dbReference>
<dbReference type="Pfam" id="PF13393">
    <property type="entry name" value="tRNA-synt_His"/>
    <property type="match status" value="1"/>
</dbReference>
<dbReference type="SUPFAM" id="SSF55681">
    <property type="entry name" value="Class II aaRS and biotin synthetases"/>
    <property type="match status" value="1"/>
</dbReference>
<feature type="chain" id="PRO_1000076251" description="ATP phosphoribosyltransferase regulatory subunit">
    <location>
        <begin position="1"/>
        <end position="272"/>
    </location>
</feature>
<sequence>MNNSEQLIALKESETAFLKYFNKADYELVDFSVVEKLDWKQLNHEDLQQMGERNFWQHEHQIYALRNDFTDQLLRYYSMYPTAATKVAYTGLIIRNNEAAVQVGLENYAPSLANVQQSLKLFIQFIQQQLRDNVHFVVLGHYQLLDALLDKSLQTPDILSMIEERNLSGLVTYLSTEHPIVQILKENTQQQLNVLEHYIPNDHPALVELKIWERWLHTQGYKDIHLDITAQPPRSYYTGLFIQCHFAENESRVLTGGYYKGSIEGFGLGLTL</sequence>